<sequence>MPGDHAGAGAAVGAAKAMQLKVLMPSSFHKMRISDELAADLLGERGDGGGGGGGAPRRAARVVSPVGKVWDVEVGRDDDGDGGGAFLGRGWAEFAAAHGLGMGWFVVVRHEGGGVLTVKLFDTTCCLWDFGARPAVVTTRSGRARDASNKPQFLRVLLPGFMEKMRIPAKFVQHYIAEEHLNIHMASILSPLGKFWRIELEKDELGMFFKGGWLQFLSFHGISPGDVVLLRHEGNLVFKIKVFGINGCKKDLKTKDDITIQQSARNQHETPSFSTRKCNKNSRFGEDCKNQLQEIPCSIKGSRKKGRETKRPKKSKSIYEIGPPSWIKKEISNYMLENGNISLPGIFCKSIGLVEETTITLMINSSRGRSSSSSSRSWEVACSVNKNGYGCCNLLPSGWKRFCQANGLLVGDVCTFSVVEATLWHVAIDRVERS</sequence>
<accession>Q7XS74</accession>
<organism>
    <name type="scientific">Oryza sativa subsp. japonica</name>
    <name type="common">Rice</name>
    <dbReference type="NCBI Taxonomy" id="39947"/>
    <lineage>
        <taxon>Eukaryota</taxon>
        <taxon>Viridiplantae</taxon>
        <taxon>Streptophyta</taxon>
        <taxon>Embryophyta</taxon>
        <taxon>Tracheophyta</taxon>
        <taxon>Spermatophyta</taxon>
        <taxon>Magnoliopsida</taxon>
        <taxon>Liliopsida</taxon>
        <taxon>Poales</taxon>
        <taxon>Poaceae</taxon>
        <taxon>BOP clade</taxon>
        <taxon>Oryzoideae</taxon>
        <taxon>Oryzeae</taxon>
        <taxon>Oryzinae</taxon>
        <taxon>Oryza</taxon>
        <taxon>Oryza sativa</taxon>
    </lineage>
</organism>
<protein>
    <recommendedName>
        <fullName>Putative B3 domain-containing protein Os04g0347400</fullName>
    </recommendedName>
</protein>
<gene>
    <name type="ordered locus">Os04g0347400</name>
    <name type="ordered locus">Os04g0347500</name>
    <name type="ordered locus">LOC_Os04g27990/LOC_Os04g28000</name>
    <name type="ORF">OsJ_14357</name>
    <name type="ORF">OSJNBa0020I02.7</name>
</gene>
<name>Y4474_ORYSJ</name>
<feature type="chain" id="PRO_0000376965" description="Putative B3 domain-containing protein Os04g0347400">
    <location>
        <begin position="1"/>
        <end position="434"/>
    </location>
</feature>
<feature type="DNA-binding region" description="TF-B3 1" evidence="1">
    <location>
        <begin position="27"/>
        <end position="124"/>
    </location>
</feature>
<feature type="DNA-binding region" description="TF-B3 2" evidence="1">
    <location>
        <begin position="150"/>
        <end position="246"/>
    </location>
</feature>
<feature type="DNA-binding region" description="TF-B3 3" evidence="1">
    <location>
        <begin position="326"/>
        <end position="432"/>
    </location>
</feature>
<evidence type="ECO:0000255" key="1">
    <source>
        <dbReference type="PROSITE-ProRule" id="PRU00326"/>
    </source>
</evidence>
<evidence type="ECO:0000305" key="2"/>
<proteinExistence type="inferred from homology"/>
<dbReference type="EMBL" id="AL662963">
    <property type="protein sequence ID" value="CAE02099.2"/>
    <property type="status" value="ALT_SEQ"/>
    <property type="molecule type" value="Genomic_DNA"/>
</dbReference>
<dbReference type="EMBL" id="AP014960">
    <property type="status" value="NOT_ANNOTATED_CDS"/>
    <property type="molecule type" value="Genomic_DNA"/>
</dbReference>
<dbReference type="EMBL" id="CM000141">
    <property type="protein sequence ID" value="EAZ30310.1"/>
    <property type="status" value="ALT_SEQ"/>
    <property type="molecule type" value="Genomic_DNA"/>
</dbReference>
<dbReference type="SMR" id="Q7XS74"/>
<dbReference type="FunCoup" id="Q7XS74">
    <property type="interactions" value="3"/>
</dbReference>
<dbReference type="STRING" id="39947.Q7XS74"/>
<dbReference type="PaxDb" id="39947-Q7XS74"/>
<dbReference type="InParanoid" id="Q7XS74"/>
<dbReference type="Proteomes" id="UP000000763">
    <property type="component" value="Chromosome 4"/>
</dbReference>
<dbReference type="Proteomes" id="UP000007752">
    <property type="component" value="Chromosome 4"/>
</dbReference>
<dbReference type="Proteomes" id="UP000059680">
    <property type="component" value="Chromosome 4"/>
</dbReference>
<dbReference type="GO" id="GO:0005634">
    <property type="term" value="C:nucleus"/>
    <property type="evidence" value="ECO:0007669"/>
    <property type="project" value="UniProtKB-SubCell"/>
</dbReference>
<dbReference type="GO" id="GO:0003677">
    <property type="term" value="F:DNA binding"/>
    <property type="evidence" value="ECO:0007669"/>
    <property type="project" value="UniProtKB-KW"/>
</dbReference>
<dbReference type="CDD" id="cd10017">
    <property type="entry name" value="B3_DNA"/>
    <property type="match status" value="2"/>
</dbReference>
<dbReference type="Gene3D" id="2.40.330.10">
    <property type="entry name" value="DNA-binding pseudobarrel domain"/>
    <property type="match status" value="3"/>
</dbReference>
<dbReference type="InterPro" id="IPR003340">
    <property type="entry name" value="B3_DNA-bd"/>
</dbReference>
<dbReference type="InterPro" id="IPR015300">
    <property type="entry name" value="DNA-bd_pseudobarrel_sf"/>
</dbReference>
<dbReference type="InterPro" id="IPR039218">
    <property type="entry name" value="REM_fam"/>
</dbReference>
<dbReference type="PANTHER" id="PTHR31674">
    <property type="entry name" value="B3 DOMAIN-CONTAINING PROTEIN REM-LIKE 3-RELATED"/>
    <property type="match status" value="1"/>
</dbReference>
<dbReference type="PANTHER" id="PTHR31674:SF62">
    <property type="entry name" value="B3 DOMAIN-CONTAINING PROTEIN REM14-RELATED"/>
    <property type="match status" value="1"/>
</dbReference>
<dbReference type="Pfam" id="PF02362">
    <property type="entry name" value="B3"/>
    <property type="match status" value="3"/>
</dbReference>
<dbReference type="SMART" id="SM01019">
    <property type="entry name" value="B3"/>
    <property type="match status" value="3"/>
</dbReference>
<dbReference type="SUPFAM" id="SSF101936">
    <property type="entry name" value="DNA-binding pseudobarrel domain"/>
    <property type="match status" value="3"/>
</dbReference>
<dbReference type="PROSITE" id="PS50863">
    <property type="entry name" value="B3"/>
    <property type="match status" value="3"/>
</dbReference>
<keyword id="KW-0238">DNA-binding</keyword>
<keyword id="KW-0539">Nucleus</keyword>
<keyword id="KW-1185">Reference proteome</keyword>
<keyword id="KW-0677">Repeat</keyword>
<keyword id="KW-0804">Transcription</keyword>
<keyword id="KW-0805">Transcription regulation</keyword>
<comment type="subcellular location">
    <subcellularLocation>
        <location evidence="1">Nucleus</location>
    </subcellularLocation>
</comment>
<comment type="sequence caution" evidence="2">
    <conflict type="erroneous gene model prediction">
        <sequence resource="EMBL-CDS" id="CAE02099"/>
    </conflict>
</comment>
<comment type="sequence caution" evidence="2">
    <conflict type="erroneous gene model prediction">
        <sequence resource="EMBL-CDS" id="EAZ30310"/>
    </conflict>
</comment>
<reference key="1">
    <citation type="journal article" date="2002" name="Nature">
        <title>Sequence and analysis of rice chromosome 4.</title>
        <authorList>
            <person name="Feng Q."/>
            <person name="Zhang Y."/>
            <person name="Hao P."/>
            <person name="Wang S."/>
            <person name="Fu G."/>
            <person name="Huang Y."/>
            <person name="Li Y."/>
            <person name="Zhu J."/>
            <person name="Liu Y."/>
            <person name="Hu X."/>
            <person name="Jia P."/>
            <person name="Zhang Y."/>
            <person name="Zhao Q."/>
            <person name="Ying K."/>
            <person name="Yu S."/>
            <person name="Tang Y."/>
            <person name="Weng Q."/>
            <person name="Zhang L."/>
            <person name="Lu Y."/>
            <person name="Mu J."/>
            <person name="Lu Y."/>
            <person name="Zhang L.S."/>
            <person name="Yu Z."/>
            <person name="Fan D."/>
            <person name="Liu X."/>
            <person name="Lu T."/>
            <person name="Li C."/>
            <person name="Wu Y."/>
            <person name="Sun T."/>
            <person name="Lei H."/>
            <person name="Li T."/>
            <person name="Hu H."/>
            <person name="Guan J."/>
            <person name="Wu M."/>
            <person name="Zhang R."/>
            <person name="Zhou B."/>
            <person name="Chen Z."/>
            <person name="Chen L."/>
            <person name="Jin Z."/>
            <person name="Wang R."/>
            <person name="Yin H."/>
            <person name="Cai Z."/>
            <person name="Ren S."/>
            <person name="Lv G."/>
            <person name="Gu W."/>
            <person name="Zhu G."/>
            <person name="Tu Y."/>
            <person name="Jia J."/>
            <person name="Zhang Y."/>
            <person name="Chen J."/>
            <person name="Kang H."/>
            <person name="Chen X."/>
            <person name="Shao C."/>
            <person name="Sun Y."/>
            <person name="Hu Q."/>
            <person name="Zhang X."/>
            <person name="Zhang W."/>
            <person name="Wang L."/>
            <person name="Ding C."/>
            <person name="Sheng H."/>
            <person name="Gu J."/>
            <person name="Chen S."/>
            <person name="Ni L."/>
            <person name="Zhu F."/>
            <person name="Chen W."/>
            <person name="Lan L."/>
            <person name="Lai Y."/>
            <person name="Cheng Z."/>
            <person name="Gu M."/>
            <person name="Jiang J."/>
            <person name="Li J."/>
            <person name="Hong G."/>
            <person name="Xue Y."/>
            <person name="Han B."/>
        </authorList>
    </citation>
    <scope>NUCLEOTIDE SEQUENCE [LARGE SCALE GENOMIC DNA]</scope>
    <source>
        <strain>cv. Nipponbare</strain>
    </source>
</reference>
<reference key="2">
    <citation type="journal article" date="2005" name="Nature">
        <title>The map-based sequence of the rice genome.</title>
        <authorList>
            <consortium name="International rice genome sequencing project (IRGSP)"/>
        </authorList>
    </citation>
    <scope>NUCLEOTIDE SEQUENCE [LARGE SCALE GENOMIC DNA]</scope>
    <source>
        <strain>cv. Nipponbare</strain>
    </source>
</reference>
<reference key="3">
    <citation type="journal article" date="2013" name="Rice">
        <title>Improvement of the Oryza sativa Nipponbare reference genome using next generation sequence and optical map data.</title>
        <authorList>
            <person name="Kawahara Y."/>
            <person name="de la Bastide M."/>
            <person name="Hamilton J.P."/>
            <person name="Kanamori H."/>
            <person name="McCombie W.R."/>
            <person name="Ouyang S."/>
            <person name="Schwartz D.C."/>
            <person name="Tanaka T."/>
            <person name="Wu J."/>
            <person name="Zhou S."/>
            <person name="Childs K.L."/>
            <person name="Davidson R.M."/>
            <person name="Lin H."/>
            <person name="Quesada-Ocampo L."/>
            <person name="Vaillancourt B."/>
            <person name="Sakai H."/>
            <person name="Lee S.S."/>
            <person name="Kim J."/>
            <person name="Numa H."/>
            <person name="Itoh T."/>
            <person name="Buell C.R."/>
            <person name="Matsumoto T."/>
        </authorList>
    </citation>
    <scope>GENOME REANNOTATION</scope>
    <source>
        <strain>cv. Nipponbare</strain>
    </source>
</reference>
<reference key="4">
    <citation type="journal article" date="2005" name="PLoS Biol.">
        <title>The genomes of Oryza sativa: a history of duplications.</title>
        <authorList>
            <person name="Yu J."/>
            <person name="Wang J."/>
            <person name="Lin W."/>
            <person name="Li S."/>
            <person name="Li H."/>
            <person name="Zhou J."/>
            <person name="Ni P."/>
            <person name="Dong W."/>
            <person name="Hu S."/>
            <person name="Zeng C."/>
            <person name="Zhang J."/>
            <person name="Zhang Y."/>
            <person name="Li R."/>
            <person name="Xu Z."/>
            <person name="Li S."/>
            <person name="Li X."/>
            <person name="Zheng H."/>
            <person name="Cong L."/>
            <person name="Lin L."/>
            <person name="Yin J."/>
            <person name="Geng J."/>
            <person name="Li G."/>
            <person name="Shi J."/>
            <person name="Liu J."/>
            <person name="Lv H."/>
            <person name="Li J."/>
            <person name="Wang J."/>
            <person name="Deng Y."/>
            <person name="Ran L."/>
            <person name="Shi X."/>
            <person name="Wang X."/>
            <person name="Wu Q."/>
            <person name="Li C."/>
            <person name="Ren X."/>
            <person name="Wang J."/>
            <person name="Wang X."/>
            <person name="Li D."/>
            <person name="Liu D."/>
            <person name="Zhang X."/>
            <person name="Ji Z."/>
            <person name="Zhao W."/>
            <person name="Sun Y."/>
            <person name="Zhang Z."/>
            <person name="Bao J."/>
            <person name="Han Y."/>
            <person name="Dong L."/>
            <person name="Ji J."/>
            <person name="Chen P."/>
            <person name="Wu S."/>
            <person name="Liu J."/>
            <person name="Xiao Y."/>
            <person name="Bu D."/>
            <person name="Tan J."/>
            <person name="Yang L."/>
            <person name="Ye C."/>
            <person name="Zhang J."/>
            <person name="Xu J."/>
            <person name="Zhou Y."/>
            <person name="Yu Y."/>
            <person name="Zhang B."/>
            <person name="Zhuang S."/>
            <person name="Wei H."/>
            <person name="Liu B."/>
            <person name="Lei M."/>
            <person name="Yu H."/>
            <person name="Li Y."/>
            <person name="Xu H."/>
            <person name="Wei S."/>
            <person name="He X."/>
            <person name="Fang L."/>
            <person name="Zhang Z."/>
            <person name="Zhang Y."/>
            <person name="Huang X."/>
            <person name="Su Z."/>
            <person name="Tong W."/>
            <person name="Li J."/>
            <person name="Tong Z."/>
            <person name="Li S."/>
            <person name="Ye J."/>
            <person name="Wang L."/>
            <person name="Fang L."/>
            <person name="Lei T."/>
            <person name="Chen C.-S."/>
            <person name="Chen H.-C."/>
            <person name="Xu Z."/>
            <person name="Li H."/>
            <person name="Huang H."/>
            <person name="Zhang F."/>
            <person name="Xu H."/>
            <person name="Li N."/>
            <person name="Zhao C."/>
            <person name="Li S."/>
            <person name="Dong L."/>
            <person name="Huang Y."/>
            <person name="Li L."/>
            <person name="Xi Y."/>
            <person name="Qi Q."/>
            <person name="Li W."/>
            <person name="Zhang B."/>
            <person name="Hu W."/>
            <person name="Zhang Y."/>
            <person name="Tian X."/>
            <person name="Jiao Y."/>
            <person name="Liang X."/>
            <person name="Jin J."/>
            <person name="Gao L."/>
            <person name="Zheng W."/>
            <person name="Hao B."/>
            <person name="Liu S.-M."/>
            <person name="Wang W."/>
            <person name="Yuan L."/>
            <person name="Cao M."/>
            <person name="McDermott J."/>
            <person name="Samudrala R."/>
            <person name="Wang J."/>
            <person name="Wong G.K.-S."/>
            <person name="Yang H."/>
        </authorList>
    </citation>
    <scope>NUCLEOTIDE SEQUENCE [LARGE SCALE GENOMIC DNA]</scope>
    <source>
        <strain>cv. Nipponbare</strain>
    </source>
</reference>